<dbReference type="EC" id="6.3.5.2" evidence="1"/>
<dbReference type="EMBL" id="BX950851">
    <property type="protein sequence ID" value="CAG76106.1"/>
    <property type="molecule type" value="Genomic_DNA"/>
</dbReference>
<dbReference type="RefSeq" id="WP_011094729.1">
    <property type="nucleotide sequence ID" value="NC_004547.2"/>
</dbReference>
<dbReference type="SMR" id="Q6D288"/>
<dbReference type="STRING" id="218491.ECA3208"/>
<dbReference type="MEROPS" id="C26.957"/>
<dbReference type="GeneID" id="57209892"/>
<dbReference type="KEGG" id="eca:ECA3208"/>
<dbReference type="PATRIC" id="fig|218491.5.peg.3250"/>
<dbReference type="eggNOG" id="COG0518">
    <property type="taxonomic scope" value="Bacteria"/>
</dbReference>
<dbReference type="eggNOG" id="COG0519">
    <property type="taxonomic scope" value="Bacteria"/>
</dbReference>
<dbReference type="HOGENOM" id="CLU_014340_0_5_6"/>
<dbReference type="OrthoDB" id="9802219at2"/>
<dbReference type="UniPathway" id="UPA00189">
    <property type="reaction ID" value="UER00296"/>
</dbReference>
<dbReference type="Proteomes" id="UP000007966">
    <property type="component" value="Chromosome"/>
</dbReference>
<dbReference type="GO" id="GO:0005829">
    <property type="term" value="C:cytosol"/>
    <property type="evidence" value="ECO:0007669"/>
    <property type="project" value="TreeGrafter"/>
</dbReference>
<dbReference type="GO" id="GO:0005524">
    <property type="term" value="F:ATP binding"/>
    <property type="evidence" value="ECO:0007669"/>
    <property type="project" value="UniProtKB-UniRule"/>
</dbReference>
<dbReference type="GO" id="GO:0003921">
    <property type="term" value="F:GMP synthase activity"/>
    <property type="evidence" value="ECO:0007669"/>
    <property type="project" value="InterPro"/>
</dbReference>
<dbReference type="CDD" id="cd01742">
    <property type="entry name" value="GATase1_GMP_Synthase"/>
    <property type="match status" value="1"/>
</dbReference>
<dbReference type="CDD" id="cd01997">
    <property type="entry name" value="GMP_synthase_C"/>
    <property type="match status" value="1"/>
</dbReference>
<dbReference type="FunFam" id="3.30.300.10:FF:000002">
    <property type="entry name" value="GMP synthase [glutamine-hydrolyzing]"/>
    <property type="match status" value="1"/>
</dbReference>
<dbReference type="FunFam" id="3.40.50.620:FF:000001">
    <property type="entry name" value="GMP synthase [glutamine-hydrolyzing]"/>
    <property type="match status" value="1"/>
</dbReference>
<dbReference type="FunFam" id="3.40.50.880:FF:000001">
    <property type="entry name" value="GMP synthase [glutamine-hydrolyzing]"/>
    <property type="match status" value="1"/>
</dbReference>
<dbReference type="Gene3D" id="3.30.300.10">
    <property type="match status" value="1"/>
</dbReference>
<dbReference type="Gene3D" id="3.40.50.880">
    <property type="match status" value="1"/>
</dbReference>
<dbReference type="Gene3D" id="3.40.50.620">
    <property type="entry name" value="HUPs"/>
    <property type="match status" value="1"/>
</dbReference>
<dbReference type="HAMAP" id="MF_00344">
    <property type="entry name" value="GMP_synthase"/>
    <property type="match status" value="1"/>
</dbReference>
<dbReference type="InterPro" id="IPR029062">
    <property type="entry name" value="Class_I_gatase-like"/>
</dbReference>
<dbReference type="InterPro" id="IPR017926">
    <property type="entry name" value="GATASE"/>
</dbReference>
<dbReference type="InterPro" id="IPR001674">
    <property type="entry name" value="GMP_synth_C"/>
</dbReference>
<dbReference type="InterPro" id="IPR004739">
    <property type="entry name" value="GMP_synth_GATase"/>
</dbReference>
<dbReference type="InterPro" id="IPR022955">
    <property type="entry name" value="GMP_synthase"/>
</dbReference>
<dbReference type="InterPro" id="IPR025777">
    <property type="entry name" value="GMPS_ATP_PPase_dom"/>
</dbReference>
<dbReference type="InterPro" id="IPR022310">
    <property type="entry name" value="NAD/GMP_synthase"/>
</dbReference>
<dbReference type="InterPro" id="IPR014729">
    <property type="entry name" value="Rossmann-like_a/b/a_fold"/>
</dbReference>
<dbReference type="NCBIfam" id="TIGR00884">
    <property type="entry name" value="guaA_Cterm"/>
    <property type="match status" value="1"/>
</dbReference>
<dbReference type="NCBIfam" id="TIGR00888">
    <property type="entry name" value="guaA_Nterm"/>
    <property type="match status" value="1"/>
</dbReference>
<dbReference type="NCBIfam" id="NF000848">
    <property type="entry name" value="PRK00074.1"/>
    <property type="match status" value="1"/>
</dbReference>
<dbReference type="PANTHER" id="PTHR11922:SF2">
    <property type="entry name" value="GMP SYNTHASE [GLUTAMINE-HYDROLYZING]"/>
    <property type="match status" value="1"/>
</dbReference>
<dbReference type="PANTHER" id="PTHR11922">
    <property type="entry name" value="GMP SYNTHASE-RELATED"/>
    <property type="match status" value="1"/>
</dbReference>
<dbReference type="Pfam" id="PF00117">
    <property type="entry name" value="GATase"/>
    <property type="match status" value="1"/>
</dbReference>
<dbReference type="Pfam" id="PF00958">
    <property type="entry name" value="GMP_synt_C"/>
    <property type="match status" value="1"/>
</dbReference>
<dbReference type="Pfam" id="PF02540">
    <property type="entry name" value="NAD_synthase"/>
    <property type="match status" value="1"/>
</dbReference>
<dbReference type="PRINTS" id="PR00097">
    <property type="entry name" value="ANTSNTHASEII"/>
</dbReference>
<dbReference type="PRINTS" id="PR00099">
    <property type="entry name" value="CPSGATASE"/>
</dbReference>
<dbReference type="PRINTS" id="PR00096">
    <property type="entry name" value="GATASE"/>
</dbReference>
<dbReference type="SUPFAM" id="SSF52402">
    <property type="entry name" value="Adenine nucleotide alpha hydrolases-like"/>
    <property type="match status" value="1"/>
</dbReference>
<dbReference type="SUPFAM" id="SSF52317">
    <property type="entry name" value="Class I glutamine amidotransferase-like"/>
    <property type="match status" value="1"/>
</dbReference>
<dbReference type="SUPFAM" id="SSF54810">
    <property type="entry name" value="GMP synthetase C-terminal dimerisation domain"/>
    <property type="match status" value="1"/>
</dbReference>
<dbReference type="PROSITE" id="PS51273">
    <property type="entry name" value="GATASE_TYPE_1"/>
    <property type="match status" value="1"/>
</dbReference>
<dbReference type="PROSITE" id="PS51553">
    <property type="entry name" value="GMPS_ATP_PPASE"/>
    <property type="match status" value="1"/>
</dbReference>
<name>GUAA_PECAS</name>
<evidence type="ECO:0000255" key="1">
    <source>
        <dbReference type="HAMAP-Rule" id="MF_00344"/>
    </source>
</evidence>
<accession>Q6D288</accession>
<protein>
    <recommendedName>
        <fullName evidence="1">GMP synthase [glutamine-hydrolyzing]</fullName>
        <ecNumber evidence="1">6.3.5.2</ecNumber>
    </recommendedName>
    <alternativeName>
        <fullName evidence="1">GMP synthetase</fullName>
    </alternativeName>
    <alternativeName>
        <fullName evidence="1">Glutamine amidotransferase</fullName>
    </alternativeName>
</protein>
<reference key="1">
    <citation type="journal article" date="2004" name="Proc. Natl. Acad. Sci. U.S.A.">
        <title>Genome sequence of the enterobacterial phytopathogen Erwinia carotovora subsp. atroseptica and characterization of virulence factors.</title>
        <authorList>
            <person name="Bell K.S."/>
            <person name="Sebaihia M."/>
            <person name="Pritchard L."/>
            <person name="Holden M.T.G."/>
            <person name="Hyman L.J."/>
            <person name="Holeva M.C."/>
            <person name="Thomson N.R."/>
            <person name="Bentley S.D."/>
            <person name="Churcher L.J.C."/>
            <person name="Mungall K."/>
            <person name="Atkin R."/>
            <person name="Bason N."/>
            <person name="Brooks K."/>
            <person name="Chillingworth T."/>
            <person name="Clark K."/>
            <person name="Doggett J."/>
            <person name="Fraser A."/>
            <person name="Hance Z."/>
            <person name="Hauser H."/>
            <person name="Jagels K."/>
            <person name="Moule S."/>
            <person name="Norbertczak H."/>
            <person name="Ormond D."/>
            <person name="Price C."/>
            <person name="Quail M.A."/>
            <person name="Sanders M."/>
            <person name="Walker D."/>
            <person name="Whitehead S."/>
            <person name="Salmond G.P.C."/>
            <person name="Birch P.R.J."/>
            <person name="Parkhill J."/>
            <person name="Toth I.K."/>
        </authorList>
    </citation>
    <scope>NUCLEOTIDE SEQUENCE [LARGE SCALE GENOMIC DNA]</scope>
    <source>
        <strain>SCRI 1043 / ATCC BAA-672</strain>
    </source>
</reference>
<gene>
    <name evidence="1" type="primary">guaA</name>
    <name type="ordered locus">ECA3208</name>
</gene>
<organism>
    <name type="scientific">Pectobacterium atrosepticum (strain SCRI 1043 / ATCC BAA-672)</name>
    <name type="common">Erwinia carotovora subsp. atroseptica</name>
    <dbReference type="NCBI Taxonomy" id="218491"/>
    <lineage>
        <taxon>Bacteria</taxon>
        <taxon>Pseudomonadati</taxon>
        <taxon>Pseudomonadota</taxon>
        <taxon>Gammaproteobacteria</taxon>
        <taxon>Enterobacterales</taxon>
        <taxon>Pectobacteriaceae</taxon>
        <taxon>Pectobacterium</taxon>
    </lineage>
</organism>
<sequence>MTQNIHQHRILILDFGSQYTQLVARRVRELGVYCELWAWDVTEAQIRGFNPNGIILSGGPESTTEFGSPRAPEYVFNAGVPVLGVCYGMQTMAMQLGGHVEGSNEREFGYAQVEVKTNSALVRDIQDALSATGAPLLDVWMSHGDKVTAIPEGFETVASTDTCPFAIMANEEKRFYGVQFHPEVTHTRQGQRMLERFVLDICQCEALWTPAKIIDDAVNRIREQVGNDSVILGLSGGVDSSVTAMLLHRAIGDRLTCVFVDNGLLRLNEADQVLEMFGDNFGLNIVHVAAEDRFLNELAGEDEPEAKRKIIGRVFVEVFDEEANKQAEVKWLAQGTIYPDVIESAASATGKAHVIKSHHNVGGLPKEMKLGLVEPLKELFKDEVRKIGLELGLPYNMLYRHPFPGPGLGVRVLGEVKKEYCDLLRRADAIFIEELHKADLYNKVSQAFTVFLPVRSVGVMGDGRKYDWVVALRAVETIDFMTAHWAHLPYDFLGRVSNRIINEVDGISRVVYDVSGKPPATIEWE</sequence>
<feature type="chain" id="PRO_0000229428" description="GMP synthase [glutamine-hydrolyzing]">
    <location>
        <begin position="1"/>
        <end position="525"/>
    </location>
</feature>
<feature type="domain" description="Glutamine amidotransferase type-1" evidence="1">
    <location>
        <begin position="9"/>
        <end position="207"/>
    </location>
</feature>
<feature type="domain" description="GMPS ATP-PPase" evidence="1">
    <location>
        <begin position="208"/>
        <end position="400"/>
    </location>
</feature>
<feature type="active site" description="Nucleophile" evidence="1">
    <location>
        <position position="86"/>
    </location>
</feature>
<feature type="active site" evidence="1">
    <location>
        <position position="181"/>
    </location>
</feature>
<feature type="active site" evidence="1">
    <location>
        <position position="183"/>
    </location>
</feature>
<feature type="binding site" evidence="1">
    <location>
        <begin position="235"/>
        <end position="241"/>
    </location>
    <ligand>
        <name>ATP</name>
        <dbReference type="ChEBI" id="CHEBI:30616"/>
    </ligand>
</feature>
<keyword id="KW-0067">ATP-binding</keyword>
<keyword id="KW-0315">Glutamine amidotransferase</keyword>
<keyword id="KW-0332">GMP biosynthesis</keyword>
<keyword id="KW-0436">Ligase</keyword>
<keyword id="KW-0547">Nucleotide-binding</keyword>
<keyword id="KW-0658">Purine biosynthesis</keyword>
<keyword id="KW-1185">Reference proteome</keyword>
<comment type="function">
    <text evidence="1">Catalyzes the synthesis of GMP from XMP.</text>
</comment>
<comment type="catalytic activity">
    <reaction evidence="1">
        <text>XMP + L-glutamine + ATP + H2O = GMP + L-glutamate + AMP + diphosphate + 2 H(+)</text>
        <dbReference type="Rhea" id="RHEA:11680"/>
        <dbReference type="ChEBI" id="CHEBI:15377"/>
        <dbReference type="ChEBI" id="CHEBI:15378"/>
        <dbReference type="ChEBI" id="CHEBI:29985"/>
        <dbReference type="ChEBI" id="CHEBI:30616"/>
        <dbReference type="ChEBI" id="CHEBI:33019"/>
        <dbReference type="ChEBI" id="CHEBI:57464"/>
        <dbReference type="ChEBI" id="CHEBI:58115"/>
        <dbReference type="ChEBI" id="CHEBI:58359"/>
        <dbReference type="ChEBI" id="CHEBI:456215"/>
        <dbReference type="EC" id="6.3.5.2"/>
    </reaction>
</comment>
<comment type="pathway">
    <text evidence="1">Purine metabolism; GMP biosynthesis; GMP from XMP (L-Gln route): step 1/1.</text>
</comment>
<comment type="subunit">
    <text evidence="1">Homodimer.</text>
</comment>
<proteinExistence type="inferred from homology"/>